<dbReference type="EC" id="4.1.1.31" evidence="1"/>
<dbReference type="EMBL" id="CP001127">
    <property type="protein sequence ID" value="ACF91726.1"/>
    <property type="molecule type" value="Genomic_DNA"/>
</dbReference>
<dbReference type="RefSeq" id="WP_001005549.1">
    <property type="nucleotide sequence ID" value="NC_011094.1"/>
</dbReference>
<dbReference type="SMR" id="B4TQH2"/>
<dbReference type="KEGG" id="sew:SeSA_A4329"/>
<dbReference type="HOGENOM" id="CLU_006557_2_0_6"/>
<dbReference type="Proteomes" id="UP000001865">
    <property type="component" value="Chromosome"/>
</dbReference>
<dbReference type="GO" id="GO:0005829">
    <property type="term" value="C:cytosol"/>
    <property type="evidence" value="ECO:0007669"/>
    <property type="project" value="TreeGrafter"/>
</dbReference>
<dbReference type="GO" id="GO:0000287">
    <property type="term" value="F:magnesium ion binding"/>
    <property type="evidence" value="ECO:0007669"/>
    <property type="project" value="UniProtKB-UniRule"/>
</dbReference>
<dbReference type="GO" id="GO:0008964">
    <property type="term" value="F:phosphoenolpyruvate carboxylase activity"/>
    <property type="evidence" value="ECO:0007669"/>
    <property type="project" value="UniProtKB-UniRule"/>
</dbReference>
<dbReference type="GO" id="GO:0015977">
    <property type="term" value="P:carbon fixation"/>
    <property type="evidence" value="ECO:0007669"/>
    <property type="project" value="UniProtKB-UniRule"/>
</dbReference>
<dbReference type="GO" id="GO:0006107">
    <property type="term" value="P:oxaloacetate metabolic process"/>
    <property type="evidence" value="ECO:0007669"/>
    <property type="project" value="UniProtKB-UniRule"/>
</dbReference>
<dbReference type="GO" id="GO:0006099">
    <property type="term" value="P:tricarboxylic acid cycle"/>
    <property type="evidence" value="ECO:0007669"/>
    <property type="project" value="InterPro"/>
</dbReference>
<dbReference type="FunFam" id="1.20.1440.90:FF:000002">
    <property type="entry name" value="Phosphoenolpyruvate carboxylase"/>
    <property type="match status" value="1"/>
</dbReference>
<dbReference type="Gene3D" id="1.20.1440.90">
    <property type="entry name" value="Phosphoenolpyruvate/pyruvate domain"/>
    <property type="match status" value="1"/>
</dbReference>
<dbReference type="HAMAP" id="MF_00595">
    <property type="entry name" value="PEPcase_type1"/>
    <property type="match status" value="1"/>
</dbReference>
<dbReference type="InterPro" id="IPR021135">
    <property type="entry name" value="PEP_COase"/>
</dbReference>
<dbReference type="InterPro" id="IPR022805">
    <property type="entry name" value="PEP_COase_bac/pln-type"/>
</dbReference>
<dbReference type="InterPro" id="IPR018129">
    <property type="entry name" value="PEP_COase_Lys_AS"/>
</dbReference>
<dbReference type="InterPro" id="IPR033129">
    <property type="entry name" value="PEPCASE_His_AS"/>
</dbReference>
<dbReference type="InterPro" id="IPR015813">
    <property type="entry name" value="Pyrv/PenolPyrv_kinase-like_dom"/>
</dbReference>
<dbReference type="NCBIfam" id="NF000584">
    <property type="entry name" value="PRK00009.1"/>
    <property type="match status" value="1"/>
</dbReference>
<dbReference type="PANTHER" id="PTHR30523">
    <property type="entry name" value="PHOSPHOENOLPYRUVATE CARBOXYLASE"/>
    <property type="match status" value="1"/>
</dbReference>
<dbReference type="PANTHER" id="PTHR30523:SF6">
    <property type="entry name" value="PHOSPHOENOLPYRUVATE CARBOXYLASE"/>
    <property type="match status" value="1"/>
</dbReference>
<dbReference type="Pfam" id="PF00311">
    <property type="entry name" value="PEPcase"/>
    <property type="match status" value="1"/>
</dbReference>
<dbReference type="PRINTS" id="PR00150">
    <property type="entry name" value="PEPCARBXLASE"/>
</dbReference>
<dbReference type="SUPFAM" id="SSF51621">
    <property type="entry name" value="Phosphoenolpyruvate/pyruvate domain"/>
    <property type="match status" value="1"/>
</dbReference>
<dbReference type="PROSITE" id="PS00781">
    <property type="entry name" value="PEPCASE_1"/>
    <property type="match status" value="1"/>
</dbReference>
<dbReference type="PROSITE" id="PS00393">
    <property type="entry name" value="PEPCASE_2"/>
    <property type="match status" value="1"/>
</dbReference>
<gene>
    <name evidence="1" type="primary">ppc</name>
    <name type="ordered locus">SeSA_A4329</name>
</gene>
<sequence>MNEQYSALRSNVSMLGKVLGETIKDALGEHILDRVETIRKLSKSSRAGNEANRQELLTTLQNLSNDELLPVARAFSQFLNLANTAEQYHSISPKGEAASNPEVIARTLRKLKNQPDLNDATIKKAVESLSLELVLTAHPTEITRRTLIHKMGEINNCLKQLDNTDIADYERHQVMRRLRQLIAQSWHTDEIRKQRPSPVDEAKWGFAVVENSLWQGVPNYLRELNEQLEENLGYKLPVDFVPVRFTSWMGGDRDGNPNVTADITRHVLLLSRWKATDLFLKDIHVLVSELSMVDATPELLALVGEEGASEPYRYLMKKLRARLMATQSWLEARLKGEKLPKPDGLLTQNEQLWEPLYACYQSLQACGMGIIANGELLDTLRRVKCFGVPLVRIDIRQESTRHTEALGEITRYLGIGDYESWSEADKQAFLIRELNSKRPLLPRNWEPSNDTREVLETCKVIAEAPKGSIAAYVISMAKTPSDVLAVHLLLKEAGIGFAMPVAPLFETLDDLNNADDVMTQLLNIDWYRGLIQGKQMVMIGYSDSAKDAGVMAASWAQYQAQDALIKTCEKAGIELTLFHGRGGSIGRGGAPAHAALLSQPPGSLKGGLRVTEQGEMIRFKYGLPEVTVSSLSLYTSAILEANLLPPPEPKDSWRHIMDELSVISCETYRGYVRENKDFVPYFRSATPEQELGKLPLGSRPAKRRPTGGVESLRAIPWIFAWTQNRLMLPAWLGAGTALQKVVEDGKQSELEAMCRDWPFFSTRLGMLEMVFSKADLWLADYYDQRLVAKTLWPLGKELRDLLEEDIKVVLAIANDSHLMADLPWIAESIQLRNVYTDPLNVLQAELLYRSRLTEEQGKSPDPRVEQALMVTIAGVAAGMRNTG</sequence>
<organism>
    <name type="scientific">Salmonella schwarzengrund (strain CVM19633)</name>
    <dbReference type="NCBI Taxonomy" id="439843"/>
    <lineage>
        <taxon>Bacteria</taxon>
        <taxon>Pseudomonadati</taxon>
        <taxon>Pseudomonadota</taxon>
        <taxon>Gammaproteobacteria</taxon>
        <taxon>Enterobacterales</taxon>
        <taxon>Enterobacteriaceae</taxon>
        <taxon>Salmonella</taxon>
    </lineage>
</organism>
<name>CAPP_SALSV</name>
<reference key="1">
    <citation type="journal article" date="2011" name="J. Bacteriol.">
        <title>Comparative genomics of 28 Salmonella enterica isolates: evidence for CRISPR-mediated adaptive sublineage evolution.</title>
        <authorList>
            <person name="Fricke W.F."/>
            <person name="Mammel M.K."/>
            <person name="McDermott P.F."/>
            <person name="Tartera C."/>
            <person name="White D.G."/>
            <person name="Leclerc J.E."/>
            <person name="Ravel J."/>
            <person name="Cebula T.A."/>
        </authorList>
    </citation>
    <scope>NUCLEOTIDE SEQUENCE [LARGE SCALE GENOMIC DNA]</scope>
    <source>
        <strain>CVM19633</strain>
    </source>
</reference>
<proteinExistence type="inferred from homology"/>
<protein>
    <recommendedName>
        <fullName evidence="1">Phosphoenolpyruvate carboxylase</fullName>
        <shortName evidence="1">PEPC</shortName>
        <shortName evidence="1">PEPCase</shortName>
        <ecNumber evidence="1">4.1.1.31</ecNumber>
    </recommendedName>
</protein>
<comment type="function">
    <text evidence="1">Forms oxaloacetate, a four-carbon dicarboxylic acid source for the tricarboxylic acid cycle.</text>
</comment>
<comment type="catalytic activity">
    <reaction evidence="1">
        <text>oxaloacetate + phosphate = phosphoenolpyruvate + hydrogencarbonate</text>
        <dbReference type="Rhea" id="RHEA:28370"/>
        <dbReference type="ChEBI" id="CHEBI:16452"/>
        <dbReference type="ChEBI" id="CHEBI:17544"/>
        <dbReference type="ChEBI" id="CHEBI:43474"/>
        <dbReference type="ChEBI" id="CHEBI:58702"/>
        <dbReference type="EC" id="4.1.1.31"/>
    </reaction>
</comment>
<comment type="cofactor">
    <cofactor evidence="1">
        <name>Mg(2+)</name>
        <dbReference type="ChEBI" id="CHEBI:18420"/>
    </cofactor>
</comment>
<comment type="similarity">
    <text evidence="1">Belongs to the PEPCase type 1 family.</text>
</comment>
<feature type="chain" id="PRO_1000129844" description="Phosphoenolpyruvate carboxylase">
    <location>
        <begin position="1"/>
        <end position="883"/>
    </location>
</feature>
<feature type="active site" evidence="1">
    <location>
        <position position="138"/>
    </location>
</feature>
<feature type="active site" evidence="1">
    <location>
        <position position="546"/>
    </location>
</feature>
<keyword id="KW-0120">Carbon dioxide fixation</keyword>
<keyword id="KW-0456">Lyase</keyword>
<keyword id="KW-0460">Magnesium</keyword>
<accession>B4TQH2</accession>
<evidence type="ECO:0000255" key="1">
    <source>
        <dbReference type="HAMAP-Rule" id="MF_00595"/>
    </source>
</evidence>